<gene>
    <name type="primary">PUP12</name>
    <name type="synonym">PUP10</name>
    <name type="ordered locus">At5g41160</name>
    <name type="ORF">MEE6.23</name>
</gene>
<organism>
    <name type="scientific">Arabidopsis thaliana</name>
    <name type="common">Mouse-ear cress</name>
    <dbReference type="NCBI Taxonomy" id="3702"/>
    <lineage>
        <taxon>Eukaryota</taxon>
        <taxon>Viridiplantae</taxon>
        <taxon>Streptophyta</taxon>
        <taxon>Embryophyta</taxon>
        <taxon>Tracheophyta</taxon>
        <taxon>Spermatophyta</taxon>
        <taxon>Magnoliopsida</taxon>
        <taxon>eudicotyledons</taxon>
        <taxon>Gunneridae</taxon>
        <taxon>Pentapetalae</taxon>
        <taxon>rosids</taxon>
        <taxon>malvids</taxon>
        <taxon>Brassicales</taxon>
        <taxon>Brassicaceae</taxon>
        <taxon>Camelineae</taxon>
        <taxon>Arabidopsis</taxon>
    </lineage>
</organism>
<protein>
    <recommendedName>
        <fullName>Putative purine permease 12</fullName>
        <shortName>AtPUP12</shortName>
    </recommendedName>
</protein>
<feature type="chain" id="PRO_0000317399" description="Putative purine permease 12">
    <location>
        <begin position="1"/>
        <end position="358"/>
    </location>
</feature>
<feature type="transmembrane region" description="Helical" evidence="1">
    <location>
        <begin position="29"/>
        <end position="49"/>
    </location>
</feature>
<feature type="transmembrane region" description="Helical" evidence="1">
    <location>
        <begin position="62"/>
        <end position="82"/>
    </location>
</feature>
<feature type="transmembrane region" description="Helical" evidence="1">
    <location>
        <begin position="100"/>
        <end position="120"/>
    </location>
</feature>
<feature type="transmembrane region" description="Helical" evidence="1">
    <location>
        <begin position="128"/>
        <end position="148"/>
    </location>
</feature>
<feature type="transmembrane region" description="Helical" evidence="1">
    <location>
        <begin position="153"/>
        <end position="173"/>
    </location>
</feature>
<feature type="transmembrane region" description="Helical" evidence="1">
    <location>
        <begin position="189"/>
        <end position="209"/>
    </location>
</feature>
<feature type="transmembrane region" description="Helical" evidence="1">
    <location>
        <begin position="235"/>
        <end position="255"/>
    </location>
</feature>
<feature type="transmembrane region" description="Helical" evidence="1">
    <location>
        <begin position="280"/>
        <end position="299"/>
    </location>
</feature>
<feature type="transmembrane region" description="Helical" evidence="1">
    <location>
        <begin position="300"/>
        <end position="316"/>
    </location>
</feature>
<feature type="transmembrane region" description="Helical" evidence="1">
    <location>
        <begin position="320"/>
        <end position="340"/>
    </location>
</feature>
<keyword id="KW-0472">Membrane</keyword>
<keyword id="KW-1185">Reference proteome</keyword>
<keyword id="KW-0812">Transmembrane</keyword>
<keyword id="KW-1133">Transmembrane helix</keyword>
<keyword id="KW-0813">Transport</keyword>
<reference key="1">
    <citation type="journal article" date="1998" name="DNA Res.">
        <title>Structural analysis of Arabidopsis thaliana chromosome 5. IV. Sequence features of the regions of 1,456,315 bp covered by nineteen physically assigned P1 and TAC clones.</title>
        <authorList>
            <person name="Sato S."/>
            <person name="Kaneko T."/>
            <person name="Kotani H."/>
            <person name="Nakamura Y."/>
            <person name="Asamizu E."/>
            <person name="Miyajima N."/>
            <person name="Tabata S."/>
        </authorList>
    </citation>
    <scope>NUCLEOTIDE SEQUENCE [LARGE SCALE GENOMIC DNA]</scope>
    <source>
        <strain>cv. Columbia</strain>
    </source>
</reference>
<reference key="2">
    <citation type="journal article" date="2017" name="Plant J.">
        <title>Araport11: a complete reannotation of the Arabidopsis thaliana reference genome.</title>
        <authorList>
            <person name="Cheng C.Y."/>
            <person name="Krishnakumar V."/>
            <person name="Chan A.P."/>
            <person name="Thibaud-Nissen F."/>
            <person name="Schobel S."/>
            <person name="Town C.D."/>
        </authorList>
    </citation>
    <scope>GENOME REANNOTATION</scope>
    <source>
        <strain>cv. Columbia</strain>
    </source>
</reference>
<reference key="3">
    <citation type="journal article" date="2000" name="Plant Cell">
        <title>A new family of high-affinity transporters for adenine, cytosine, and purine derivatives in Arabidopsis.</title>
        <authorList>
            <person name="Gillissen B."/>
            <person name="Buerkle L."/>
            <person name="Andre B."/>
            <person name="Kuehn C."/>
            <person name="Rentsch D."/>
            <person name="Brandl B."/>
            <person name="Frommer W.B."/>
        </authorList>
    </citation>
    <scope>GENE FAMILY</scope>
    <scope>NOMENCLATURE</scope>
</reference>
<comment type="subcellular location">
    <subcellularLocation>
        <location evidence="2">Membrane</location>
        <topology evidence="2">Multi-pass membrane protein</topology>
    </subcellularLocation>
</comment>
<comment type="similarity">
    <text evidence="2">Belongs to the purine permeases (TC 2.A.7.14) family.</text>
</comment>
<dbReference type="EMBL" id="AB010072">
    <property type="protein sequence ID" value="BAB09718.1"/>
    <property type="molecule type" value="Genomic_DNA"/>
</dbReference>
<dbReference type="EMBL" id="CP002688">
    <property type="status" value="NOT_ANNOTATED_CDS"/>
    <property type="molecule type" value="Genomic_DNA"/>
</dbReference>
<dbReference type="SMR" id="Q9FLL4"/>
<dbReference type="IntAct" id="Q9FLL4">
    <property type="interactions" value="1"/>
</dbReference>
<dbReference type="STRING" id="3702.Q9FLL4"/>
<dbReference type="PaxDb" id="3702-AT5G41160.1"/>
<dbReference type="ProteomicsDB" id="226362"/>
<dbReference type="Araport" id="AT5G41160"/>
<dbReference type="TAIR" id="AT5G41160">
    <property type="gene designation" value="PUP12"/>
</dbReference>
<dbReference type="eggNOG" id="ENOG502QRUH">
    <property type="taxonomic scope" value="Eukaryota"/>
</dbReference>
<dbReference type="HOGENOM" id="CLU_043459_2_1_1"/>
<dbReference type="InParanoid" id="Q9FLL4"/>
<dbReference type="PhylomeDB" id="Q9FLL4"/>
<dbReference type="PRO" id="PR:Q9FLL4"/>
<dbReference type="Proteomes" id="UP000006548">
    <property type="component" value="Chromosome 5"/>
</dbReference>
<dbReference type="ExpressionAtlas" id="Q9FLL4">
    <property type="expression patterns" value="baseline and differential"/>
</dbReference>
<dbReference type="GO" id="GO:0016020">
    <property type="term" value="C:membrane"/>
    <property type="evidence" value="ECO:0000304"/>
    <property type="project" value="TAIR"/>
</dbReference>
<dbReference type="GO" id="GO:0005345">
    <property type="term" value="F:purine nucleobase transmembrane transporter activity"/>
    <property type="evidence" value="ECO:0000304"/>
    <property type="project" value="TAIR"/>
</dbReference>
<dbReference type="GO" id="GO:0015211">
    <property type="term" value="F:purine nucleoside transmembrane transporter activity"/>
    <property type="evidence" value="ECO:0007669"/>
    <property type="project" value="InterPro"/>
</dbReference>
<dbReference type="GO" id="GO:0006863">
    <property type="term" value="P:purine nucleobase transport"/>
    <property type="evidence" value="ECO:0000304"/>
    <property type="project" value="TAIR"/>
</dbReference>
<dbReference type="InterPro" id="IPR030182">
    <property type="entry name" value="PUP_plant"/>
</dbReference>
<dbReference type="PANTHER" id="PTHR31376">
    <property type="entry name" value="OS09G0467300 PROTEIN-RELATED"/>
    <property type="match status" value="1"/>
</dbReference>
<dbReference type="PANTHER" id="PTHR31376:SF58">
    <property type="entry name" value="PURINE PERMEASE 12-RELATED"/>
    <property type="match status" value="1"/>
</dbReference>
<dbReference type="Pfam" id="PF16913">
    <property type="entry name" value="PUNUT"/>
    <property type="match status" value="1"/>
</dbReference>
<proteinExistence type="inferred from homology"/>
<sequence length="358" mass="39623">MLLLKEEDEGRRRTSVPTQLMKLNRSQWWILVFISIFFLISAQAISVLLGRFYYNEGGNSKWISTLVQTGGFPILYLPLSLLPASQSSSSSSSSSSFKTLVWIYLSLGFAIGLDNFLYSVGLLYLSASTYSILCASQLAFNGVFYYYINSQKITCLIFFSVLFLSISAVLVSLDDDSNSPSGDSKWSYLIGCFCAVFASLIYSLQLSLMQFSFEKVLKSETLSMVLEMQIYTSLVASCVAVIGLFASGEWMLLSVEMEEFQEGQVIYVLTLVGAAVSCQLGCVGAVSLIFLVSSLFSNLISTLSLIVTPLAAIAVFHDKLTEVKMVAMPIAFTGFTFYIYQNYLDDLKVQRAREAQAE</sequence>
<name>PUP12_ARATH</name>
<accession>Q9FLL4</accession>
<evidence type="ECO:0000255" key="1"/>
<evidence type="ECO:0000305" key="2"/>